<name>MCL1_RAT</name>
<proteinExistence type="evidence at protein level"/>
<reference key="1">
    <citation type="journal article" date="1999" name="Endocrinology">
        <title>Characterization of the antiapoptotic Bcl-2 family member myeloid cell leukemia-1 (Mcl-1) and the stimulation of its message by gonadotropins in the rat ovary.</title>
        <authorList>
            <person name="Leo C.P."/>
            <person name="Hsu S.Y."/>
            <person name="Chun S.-Y."/>
            <person name="Bae H.-W."/>
            <person name="Hsueh A.J.W."/>
        </authorList>
    </citation>
    <scope>NUCLEOTIDE SEQUENCE [MRNA]</scope>
    <scope>INTERACTION WITH BAD; BAX; BOK; BIK AND BCL2L11</scope>
    <scope>TISSUE SPECIFICITY</scope>
    <source>
        <strain>Sprague-Dawley</strain>
        <tissue>Ovary</tissue>
    </source>
</reference>
<reference key="2">
    <citation type="journal article" date="2004" name="Genome Res.">
        <title>The status, quality, and expansion of the NIH full-length cDNA project: the Mammalian Gene Collection (MGC).</title>
        <authorList>
            <consortium name="The MGC Project Team"/>
        </authorList>
    </citation>
    <scope>NUCLEOTIDE SEQUENCE [LARGE SCALE MRNA]</scope>
    <source>
        <tissue>Lung</tissue>
    </source>
</reference>
<reference key="3">
    <citation type="submission" date="1999-04" db="EMBL/GenBank/DDBJ databases">
        <title>Mcl-1 in the rat ovary.</title>
        <authorList>
            <person name="Murray J.F."/>
            <person name="Dong Y.B."/>
            <person name="Leigh A.J."/>
            <person name="Scaramuzzi R.J."/>
            <person name="Carter N.D."/>
        </authorList>
    </citation>
    <scope>NUCLEOTIDE SEQUENCE [MRNA] OF 227-330</scope>
    <source>
        <strain>Wistar</strain>
        <tissue>Ovary</tissue>
    </source>
</reference>
<accession>Q9Z1P3</accession>
<accession>Q6AYY5</accession>
<accession>Q9R289</accession>
<evidence type="ECO:0000250" key="1"/>
<evidence type="ECO:0000250" key="2">
    <source>
        <dbReference type="UniProtKB" id="P97287"/>
    </source>
</evidence>
<evidence type="ECO:0000250" key="3">
    <source>
        <dbReference type="UniProtKB" id="Q07820"/>
    </source>
</evidence>
<evidence type="ECO:0000255" key="4"/>
<evidence type="ECO:0000256" key="5">
    <source>
        <dbReference type="SAM" id="MobiDB-lite"/>
    </source>
</evidence>
<evidence type="ECO:0000269" key="6">
    <source>
    </source>
</evidence>
<evidence type="ECO:0000305" key="7"/>
<protein>
    <recommendedName>
        <fullName>Induced myeloid leukemia cell differentiation protein Mcl-1 homolog</fullName>
    </recommendedName>
</protein>
<comment type="function">
    <text>Involved in the regulation of apoptosis versus cell survival, and in the maintenance of viability but not of proliferation. Mediates its effects by interactions with a number of other regulators of apoptosis.</text>
</comment>
<comment type="subunit">
    <text evidence="2 3 6">Interacts with HIF3A (via C-terminus domain) (By similarity). Interacts with BOK, BIK, BAX, BAK1, and TPT1. Interacts with unphosphorylated BAD (PubMed:10579309). Interacts with BMF, BBC3 and PMAIP1 (By similarity). Interacts with BOP (By similarity). Interacts with BCL2L11; may sequester BCL2L11 to prevent its pro-apoptotic activity (By similarity) (PubMed:10579309). Interacts with GIMAP5 and HSPA8/HSC70; the interaction between HSPA8 and MCL1 is impaired in the absence of GIMAP5 (By similarity).</text>
</comment>
<comment type="subcellular location">
    <subcellularLocation>
        <location evidence="1">Membrane</location>
        <topology evidence="1">Single-pass membrane protein</topology>
    </subcellularLocation>
    <subcellularLocation>
        <location evidence="1">Cytoplasm</location>
    </subcellularLocation>
    <subcellularLocation>
        <location evidence="1">Mitochondrion</location>
    </subcellularLocation>
    <subcellularLocation>
        <location evidence="1">Nucleus</location>
        <location evidence="1">Nucleoplasm</location>
    </subcellularLocation>
    <text>Cytoplasmic, associated with mitochondria.</text>
</comment>
<comment type="tissue specificity">
    <text evidence="6">Ubiquitous. Highly expressed in heart, spleen, lung, liver, skeletal muscle and kidney. Detected at lower levels in brain, ovary, oviduct and testis.</text>
</comment>
<comment type="developmental stage">
    <text>Detected in neonate ovaries and expressed at constant levels in 3 to 6 day old animals. Levels are increased in at day 12 and thereafter.</text>
</comment>
<comment type="PTM">
    <text evidence="1">Cleaved by CASP3 during apoptosis, yielding a pro-apoptotic C-terminal fragment.</text>
</comment>
<comment type="PTM">
    <text evidence="1">Rapidly degraded in the absence of phosphorylation in the PEST region.</text>
</comment>
<comment type="PTM">
    <text evidence="1">Phosphorylated on Ser-139, by GSK3, in response to IL3/interleukin-3 withdrawal. Phosphorylation at Ser-139 induces ubiquitination and proteasomal degradation, abrogating the anti-apoptotic activity. Treatment with taxol or okadaic acid induces phosphorylation on additional sites (By similarity).</text>
</comment>
<comment type="PTM">
    <text evidence="3">Ubiquitinated. Ubiquitination is induced by phosphorylation at Ser-139 (By similarity). Deubiquitinated by USP20; leading to increased stability.</text>
</comment>
<comment type="similarity">
    <text evidence="7">Belongs to the Bcl-2 family.</text>
</comment>
<gene>
    <name type="primary">Mcl1</name>
</gene>
<dbReference type="EMBL" id="AF115380">
    <property type="protein sequence ID" value="AAD13295.1"/>
    <property type="molecule type" value="mRNA"/>
</dbReference>
<dbReference type="EMBL" id="BC078835">
    <property type="protein sequence ID" value="AAH78835.1"/>
    <property type="molecule type" value="mRNA"/>
</dbReference>
<dbReference type="EMBL" id="AF144096">
    <property type="protein sequence ID" value="AAD31519.1"/>
    <property type="molecule type" value="mRNA"/>
</dbReference>
<dbReference type="RefSeq" id="NP_068618.2">
    <property type="nucleotide sequence ID" value="NM_021846.2"/>
</dbReference>
<dbReference type="SMR" id="Q9Z1P3"/>
<dbReference type="ComplexPortal" id="CPX-306">
    <property type="entry name" value="MCL1:PMAIP1 complex"/>
</dbReference>
<dbReference type="ELM" id="Q9Z1P3"/>
<dbReference type="FunCoup" id="Q9Z1P3">
    <property type="interactions" value="646"/>
</dbReference>
<dbReference type="IntAct" id="Q9Z1P3">
    <property type="interactions" value="2"/>
</dbReference>
<dbReference type="iPTMnet" id="Q9Z1P3"/>
<dbReference type="PhosphoSitePlus" id="Q9Z1P3"/>
<dbReference type="jPOST" id="Q9Z1P3"/>
<dbReference type="Ensembl" id="ENSRNOT00000109758.1">
    <property type="protein sequence ID" value="ENSRNOP00000097988.1"/>
    <property type="gene ID" value="ENSRNOG00000063678.1"/>
</dbReference>
<dbReference type="GeneID" id="60430"/>
<dbReference type="KEGG" id="rno:60430"/>
<dbReference type="AGR" id="RGD:620525"/>
<dbReference type="CTD" id="4170"/>
<dbReference type="RGD" id="620525">
    <property type="gene designation" value="Mcl1"/>
</dbReference>
<dbReference type="GeneTree" id="ENSGT01130000278292"/>
<dbReference type="InParanoid" id="Q9Z1P3"/>
<dbReference type="OMA" id="FFAPTRC"/>
<dbReference type="OrthoDB" id="8932147at2759"/>
<dbReference type="PhylomeDB" id="Q9Z1P3"/>
<dbReference type="PRO" id="PR:Q9Z1P3"/>
<dbReference type="Proteomes" id="UP000002494">
    <property type="component" value="Chromosome 2"/>
</dbReference>
<dbReference type="GO" id="GO:0097136">
    <property type="term" value="C:Bcl-2 family protein complex"/>
    <property type="evidence" value="ECO:0000266"/>
    <property type="project" value="RGD"/>
</dbReference>
<dbReference type="GO" id="GO:0005737">
    <property type="term" value="C:cytoplasm"/>
    <property type="evidence" value="ECO:0000266"/>
    <property type="project" value="RGD"/>
</dbReference>
<dbReference type="GO" id="GO:0005829">
    <property type="term" value="C:cytosol"/>
    <property type="evidence" value="ECO:0000250"/>
    <property type="project" value="UniProtKB"/>
</dbReference>
<dbReference type="GO" id="GO:0016020">
    <property type="term" value="C:membrane"/>
    <property type="evidence" value="ECO:0000250"/>
    <property type="project" value="UniProtKB"/>
</dbReference>
<dbReference type="GO" id="GO:0005741">
    <property type="term" value="C:mitochondrial outer membrane"/>
    <property type="evidence" value="ECO:0000318"/>
    <property type="project" value="GO_Central"/>
</dbReference>
<dbReference type="GO" id="GO:0005739">
    <property type="term" value="C:mitochondrion"/>
    <property type="evidence" value="ECO:0000266"/>
    <property type="project" value="RGD"/>
</dbReference>
<dbReference type="GO" id="GO:0005654">
    <property type="term" value="C:nucleoplasm"/>
    <property type="evidence" value="ECO:0007669"/>
    <property type="project" value="UniProtKB-SubCell"/>
</dbReference>
<dbReference type="GO" id="GO:0005634">
    <property type="term" value="C:nucleus"/>
    <property type="evidence" value="ECO:0000266"/>
    <property type="project" value="RGD"/>
</dbReference>
<dbReference type="GO" id="GO:0051400">
    <property type="term" value="F:BH domain binding"/>
    <property type="evidence" value="ECO:0000353"/>
    <property type="project" value="RGD"/>
</dbReference>
<dbReference type="GO" id="GO:0051434">
    <property type="term" value="F:BH3 domain binding"/>
    <property type="evidence" value="ECO:0000266"/>
    <property type="project" value="RGD"/>
</dbReference>
<dbReference type="GO" id="GO:0015267">
    <property type="term" value="F:channel activity"/>
    <property type="evidence" value="ECO:0000318"/>
    <property type="project" value="GO_Central"/>
</dbReference>
<dbReference type="GO" id="GO:0046983">
    <property type="term" value="F:protein dimerization activity"/>
    <property type="evidence" value="ECO:0000353"/>
    <property type="project" value="UniProtKB"/>
</dbReference>
<dbReference type="GO" id="GO:0046982">
    <property type="term" value="F:protein heterodimerization activity"/>
    <property type="evidence" value="ECO:0000266"/>
    <property type="project" value="RGD"/>
</dbReference>
<dbReference type="GO" id="GO:0044877">
    <property type="term" value="F:protein-containing complex binding"/>
    <property type="evidence" value="ECO:0000353"/>
    <property type="project" value="RGD"/>
</dbReference>
<dbReference type="GO" id="GO:0030154">
    <property type="term" value="P:cell differentiation"/>
    <property type="evidence" value="ECO:0007669"/>
    <property type="project" value="UniProtKB-KW"/>
</dbReference>
<dbReference type="GO" id="GO:0006974">
    <property type="term" value="P:DNA damage response"/>
    <property type="evidence" value="ECO:0000266"/>
    <property type="project" value="RGD"/>
</dbReference>
<dbReference type="GO" id="GO:0097192">
    <property type="term" value="P:extrinsic apoptotic signaling pathway in absence of ligand"/>
    <property type="evidence" value="ECO:0000250"/>
    <property type="project" value="UniProtKB"/>
</dbReference>
<dbReference type="GO" id="GO:0008630">
    <property type="term" value="P:intrinsic apoptotic signaling pathway in response to DNA damage"/>
    <property type="evidence" value="ECO:0000266"/>
    <property type="project" value="RGD"/>
</dbReference>
<dbReference type="GO" id="GO:0008053">
    <property type="term" value="P:mitochondrial fusion"/>
    <property type="evidence" value="ECO:0000318"/>
    <property type="project" value="GO_Central"/>
</dbReference>
<dbReference type="GO" id="GO:2000811">
    <property type="term" value="P:negative regulation of anoikis"/>
    <property type="evidence" value="ECO:0000266"/>
    <property type="project" value="RGD"/>
</dbReference>
<dbReference type="GO" id="GO:0043066">
    <property type="term" value="P:negative regulation of apoptotic process"/>
    <property type="evidence" value="ECO:0000314"/>
    <property type="project" value="RGD"/>
</dbReference>
<dbReference type="GO" id="GO:0010507">
    <property type="term" value="P:negative regulation of autophagy"/>
    <property type="evidence" value="ECO:0000266"/>
    <property type="project" value="RGD"/>
</dbReference>
<dbReference type="GO" id="GO:2001240">
    <property type="term" value="P:negative regulation of extrinsic apoptotic signaling pathway in absence of ligand"/>
    <property type="evidence" value="ECO:0000266"/>
    <property type="project" value="RGD"/>
</dbReference>
<dbReference type="GO" id="GO:0043065">
    <property type="term" value="P:positive regulation of apoptotic process"/>
    <property type="evidence" value="ECO:0000266"/>
    <property type="project" value="RGD"/>
</dbReference>
<dbReference type="GO" id="GO:0043525">
    <property type="term" value="P:positive regulation of neuron apoptotic process"/>
    <property type="evidence" value="ECO:0000318"/>
    <property type="project" value="GO_Central"/>
</dbReference>
<dbReference type="GO" id="GO:1903378">
    <property type="term" value="P:positive regulation of oxidative stress-induced neuron intrinsic apoptotic signaling pathway"/>
    <property type="evidence" value="ECO:0000266"/>
    <property type="project" value="RGD"/>
</dbReference>
<dbReference type="GO" id="GO:0001836">
    <property type="term" value="P:release of cytochrome c from mitochondria"/>
    <property type="evidence" value="ECO:0000318"/>
    <property type="project" value="GO_Central"/>
</dbReference>
<dbReference type="GO" id="GO:0034097">
    <property type="term" value="P:response to cytokine"/>
    <property type="evidence" value="ECO:0000266"/>
    <property type="project" value="RGD"/>
</dbReference>
<dbReference type="CDD" id="cd06845">
    <property type="entry name" value="Bcl-2_like"/>
    <property type="match status" value="1"/>
</dbReference>
<dbReference type="FunFam" id="1.10.437.10:FF:000002">
    <property type="entry name" value="Induced myeloid leukemia cell differentiation protein Mcl-1"/>
    <property type="match status" value="1"/>
</dbReference>
<dbReference type="Gene3D" id="1.10.437.10">
    <property type="entry name" value="Blc2-like"/>
    <property type="match status" value="1"/>
</dbReference>
<dbReference type="InterPro" id="IPR013281">
    <property type="entry name" value="Apop_reg_Mc1"/>
</dbReference>
<dbReference type="InterPro" id="IPR036834">
    <property type="entry name" value="Bcl-2-like_sf"/>
</dbReference>
<dbReference type="InterPro" id="IPR046371">
    <property type="entry name" value="Bcl-2_BH1-3"/>
</dbReference>
<dbReference type="InterPro" id="IPR026298">
    <property type="entry name" value="Bcl-2_fam"/>
</dbReference>
<dbReference type="InterPro" id="IPR002475">
    <property type="entry name" value="Bcl2-like"/>
</dbReference>
<dbReference type="InterPro" id="IPR020717">
    <property type="entry name" value="Bcl2_BH1_motif_CS"/>
</dbReference>
<dbReference type="InterPro" id="IPR020726">
    <property type="entry name" value="Bcl2_BH2_motif_CS"/>
</dbReference>
<dbReference type="InterPro" id="IPR020728">
    <property type="entry name" value="Bcl2_BH3_motif_CS"/>
</dbReference>
<dbReference type="PANTHER" id="PTHR11256">
    <property type="entry name" value="BCL-2 RELATED"/>
    <property type="match status" value="1"/>
</dbReference>
<dbReference type="PANTHER" id="PTHR11256:SF46">
    <property type="entry name" value="INDUCED MYELOID LEUKEMIA CELL DIFFERENTIATION PROTEIN MCL-1"/>
    <property type="match status" value="1"/>
</dbReference>
<dbReference type="Pfam" id="PF00452">
    <property type="entry name" value="Bcl-2"/>
    <property type="match status" value="1"/>
</dbReference>
<dbReference type="PRINTS" id="PR01866">
    <property type="entry name" value="APOPREGMCL1"/>
</dbReference>
<dbReference type="PRINTS" id="PR01862">
    <property type="entry name" value="BCL2FAMILY"/>
</dbReference>
<dbReference type="SMART" id="SM00337">
    <property type="entry name" value="BCL"/>
    <property type="match status" value="1"/>
</dbReference>
<dbReference type="SUPFAM" id="SSF56854">
    <property type="entry name" value="Bcl-2 inhibitors of programmed cell death"/>
    <property type="match status" value="1"/>
</dbReference>
<dbReference type="PROSITE" id="PS50062">
    <property type="entry name" value="BCL2_FAMILY"/>
    <property type="match status" value="1"/>
</dbReference>
<dbReference type="PROSITE" id="PS01080">
    <property type="entry name" value="BH1"/>
    <property type="match status" value="1"/>
</dbReference>
<dbReference type="PROSITE" id="PS01258">
    <property type="entry name" value="BH2"/>
    <property type="match status" value="1"/>
</dbReference>
<dbReference type="PROSITE" id="PS01259">
    <property type="entry name" value="BH3"/>
    <property type="match status" value="1"/>
</dbReference>
<feature type="chain" id="PRO_0000143082" description="Induced myeloid leukemia cell differentiation protein Mcl-1 homolog">
    <location>
        <begin position="1"/>
        <end position="330"/>
    </location>
</feature>
<feature type="transmembrane region" description="Helical" evidence="4">
    <location>
        <begin position="307"/>
        <end position="329"/>
    </location>
</feature>
<feature type="region of interest" description="PEST-like" evidence="1">
    <location>
        <begin position="85"/>
        <end position="155"/>
    </location>
</feature>
<feature type="region of interest" description="Disordered" evidence="5">
    <location>
        <begin position="129"/>
        <end position="153"/>
    </location>
</feature>
<feature type="short sequence motif" description="BH3">
    <location>
        <begin position="189"/>
        <end position="203"/>
    </location>
</feature>
<feature type="short sequence motif" description="BH1">
    <location>
        <begin position="232"/>
        <end position="252"/>
    </location>
</feature>
<feature type="short sequence motif" description="BH2">
    <location>
        <begin position="284"/>
        <end position="299"/>
    </location>
</feature>
<feature type="site" description="Cleavage; by caspase-3" evidence="1">
    <location>
        <begin position="107"/>
        <end position="108"/>
    </location>
</feature>
<feature type="site" description="Cleavage; by caspase-3" evidence="1">
    <location>
        <begin position="137"/>
        <end position="138"/>
    </location>
</feature>
<feature type="modified residue" description="Phosphoserine" evidence="3">
    <location>
        <position position="101"/>
    </location>
</feature>
<feature type="modified residue" description="Phosphoserine; by GSK3-alpha and GSK3-beta" evidence="3">
    <location>
        <position position="139"/>
    </location>
</feature>
<feature type="modified residue" description="Phosphoserine" evidence="3">
    <location>
        <position position="142"/>
    </location>
</feature>
<feature type="modified residue" description="Phosphothreonine; by MAPK" evidence="3">
    <location>
        <position position="143"/>
    </location>
</feature>
<feature type="cross-link" description="Glycyl lysine isopeptide (Lys-Gly) (interchain with G-Cter in ubiquitin)" evidence="3">
    <location>
        <position position="116"/>
    </location>
</feature>
<feature type="cross-link" description="Glycyl lysine isopeptide (Lys-Gly) (interchain with G-Cter in ubiquitin)" evidence="3">
    <location>
        <position position="174"/>
    </location>
</feature>
<feature type="cross-link" description="Glycyl lysine isopeptide (Lys-Gly) (interchain with G-Cter in ubiquitin)" evidence="3">
    <location>
        <position position="177"/>
    </location>
</feature>
<feature type="sequence conflict" description="In Ref. 1; AAD13295." evidence="7" ref="1">
    <original>R</original>
    <variation>H</variation>
    <location>
        <position position="156"/>
    </location>
</feature>
<feature type="sequence conflict" description="In Ref. 3; AAD31519." evidence="7" ref="3">
    <original>T</original>
    <variation>I</variation>
    <location>
        <position position="231"/>
    </location>
</feature>
<feature type="sequence conflict" description="In Ref. 3; AAD31519." evidence="7" ref="3">
    <original>A</original>
    <variation>V</variation>
    <location>
        <position position="316"/>
    </location>
</feature>
<keyword id="KW-0053">Apoptosis</keyword>
<keyword id="KW-0963">Cytoplasm</keyword>
<keyword id="KW-0217">Developmental protein</keyword>
<keyword id="KW-0221">Differentiation</keyword>
<keyword id="KW-1017">Isopeptide bond</keyword>
<keyword id="KW-0472">Membrane</keyword>
<keyword id="KW-0496">Mitochondrion</keyword>
<keyword id="KW-0539">Nucleus</keyword>
<keyword id="KW-0597">Phosphoprotein</keyword>
<keyword id="KW-1185">Reference proteome</keyword>
<keyword id="KW-0812">Transmembrane</keyword>
<keyword id="KW-1133">Transmembrane helix</keyword>
<keyword id="KW-0832">Ubl conjugation</keyword>
<sequence length="330" mass="35214">MFGLRRNAVIGLNLYCGGASLGAGGGSPAGTRLAAEEAKARREGGGEAALLPGARVVARPPPVGAEDPDVTASAERRLLKSPGLLAVPPEEMAASAAAIMSPEEELDGCEPEVLSKRPAVLPLLERVSEAAKSSGADGSLPSTPPPPEEEDDELYRQSLEIISRYLREQATGSKDAKPLGEAGAAGRRALETLRRVGDGVQRNHETAFQGMLRKLDIKNEDDVKSFSRVMTHVFKDGVTNWGRIVTLISFGAFVAKHLKSINQESCIEPLAESITDVLVRTKRDWLVKQRGWDGFVEFFHVQDLEGGIRNVLLAFAGVAGVGAGLAYLIR</sequence>
<organism>
    <name type="scientific">Rattus norvegicus</name>
    <name type="common">Rat</name>
    <dbReference type="NCBI Taxonomy" id="10116"/>
    <lineage>
        <taxon>Eukaryota</taxon>
        <taxon>Metazoa</taxon>
        <taxon>Chordata</taxon>
        <taxon>Craniata</taxon>
        <taxon>Vertebrata</taxon>
        <taxon>Euteleostomi</taxon>
        <taxon>Mammalia</taxon>
        <taxon>Eutheria</taxon>
        <taxon>Euarchontoglires</taxon>
        <taxon>Glires</taxon>
        <taxon>Rodentia</taxon>
        <taxon>Myomorpha</taxon>
        <taxon>Muroidea</taxon>
        <taxon>Muridae</taxon>
        <taxon>Murinae</taxon>
        <taxon>Rattus</taxon>
    </lineage>
</organism>